<evidence type="ECO:0000250" key="1">
    <source>
        <dbReference type="UniProtKB" id="P22061"/>
    </source>
</evidence>
<evidence type="ECO:0000250" key="2">
    <source>
        <dbReference type="UniProtKB" id="Q27869"/>
    </source>
</evidence>
<evidence type="ECO:0000250" key="3">
    <source>
        <dbReference type="UniProtKB" id="Q96MG8"/>
    </source>
</evidence>
<evidence type="ECO:0000255" key="4"/>
<evidence type="ECO:0000256" key="5">
    <source>
        <dbReference type="SAM" id="MobiDB-lite"/>
    </source>
</evidence>
<evidence type="ECO:0000303" key="6">
    <source>
    </source>
</evidence>
<evidence type="ECO:0000303" key="7">
    <source>
    </source>
</evidence>
<evidence type="ECO:0000305" key="8"/>
<organism>
    <name type="scientific">Homo sapiens</name>
    <name type="common">Human</name>
    <dbReference type="NCBI Taxonomy" id="9606"/>
    <lineage>
        <taxon>Eukaryota</taxon>
        <taxon>Metazoa</taxon>
        <taxon>Chordata</taxon>
        <taxon>Craniata</taxon>
        <taxon>Vertebrata</taxon>
        <taxon>Euteleostomi</taxon>
        <taxon>Mammalia</taxon>
        <taxon>Eutheria</taxon>
        <taxon>Euarchontoglires</taxon>
        <taxon>Primates</taxon>
        <taxon>Haplorrhini</taxon>
        <taxon>Catarrhini</taxon>
        <taxon>Hominidae</taxon>
        <taxon>Homo</taxon>
    </lineage>
</organism>
<gene>
    <name type="primary">PCMTD2</name>
    <name type="synonym">C20orf36</name>
</gene>
<proteinExistence type="evidence at protein level"/>
<keyword id="KW-0025">Alternative splicing</keyword>
<keyword id="KW-0963">Cytoplasm</keyword>
<keyword id="KW-0449">Lipoprotein</keyword>
<keyword id="KW-0519">Myristate</keyword>
<keyword id="KW-1267">Proteomics identification</keyword>
<keyword id="KW-1185">Reference proteome</keyword>
<dbReference type="EMBL" id="AK001745">
    <property type="protein sequence ID" value="BAA91877.1"/>
    <property type="molecule type" value="mRNA"/>
</dbReference>
<dbReference type="EMBL" id="AK126700">
    <property type="protein sequence ID" value="BAC86648.1"/>
    <property type="molecule type" value="mRNA"/>
</dbReference>
<dbReference type="EMBL" id="AL121581">
    <property type="status" value="NOT_ANNOTATED_CDS"/>
    <property type="molecule type" value="Genomic_DNA"/>
</dbReference>
<dbReference type="EMBL" id="CH471077">
    <property type="protein sequence ID" value="EAW75152.1"/>
    <property type="molecule type" value="Genomic_DNA"/>
</dbReference>
<dbReference type="EMBL" id="CH471077">
    <property type="protein sequence ID" value="EAW75153.1"/>
    <property type="molecule type" value="Genomic_DNA"/>
</dbReference>
<dbReference type="EMBL" id="BC033665">
    <property type="protein sequence ID" value="AAH33665.1"/>
    <property type="molecule type" value="mRNA"/>
</dbReference>
<dbReference type="EMBL" id="BC040945">
    <property type="protein sequence ID" value="AAH40945.1"/>
    <property type="molecule type" value="mRNA"/>
</dbReference>
<dbReference type="CCDS" id="CCDS13559.1">
    <molecule id="Q9NV79-1"/>
</dbReference>
<dbReference type="CCDS" id="CCDS46631.1">
    <molecule id="Q9NV79-2"/>
</dbReference>
<dbReference type="RefSeq" id="NP_001098395.1">
    <molecule id="Q9NV79-2"/>
    <property type="nucleotide sequence ID" value="NM_001104925.2"/>
</dbReference>
<dbReference type="RefSeq" id="NP_060727.2">
    <molecule id="Q9NV79-1"/>
    <property type="nucleotide sequence ID" value="NM_018257.3"/>
</dbReference>
<dbReference type="SMR" id="Q9NV79"/>
<dbReference type="BioGRID" id="120542">
    <property type="interactions" value="27"/>
</dbReference>
<dbReference type="FunCoup" id="Q9NV79">
    <property type="interactions" value="970"/>
</dbReference>
<dbReference type="IntAct" id="Q9NV79">
    <property type="interactions" value="24"/>
</dbReference>
<dbReference type="MINT" id="Q9NV79"/>
<dbReference type="STRING" id="9606.ENSP00000307854"/>
<dbReference type="iPTMnet" id="Q9NV79"/>
<dbReference type="PhosphoSitePlus" id="Q9NV79"/>
<dbReference type="BioMuta" id="PCMTD2"/>
<dbReference type="DMDM" id="41688812"/>
<dbReference type="jPOST" id="Q9NV79"/>
<dbReference type="MassIVE" id="Q9NV79"/>
<dbReference type="PaxDb" id="9606-ENSP00000307854"/>
<dbReference type="PeptideAtlas" id="Q9NV79"/>
<dbReference type="ProteomicsDB" id="82757">
    <molecule id="Q9NV79-1"/>
</dbReference>
<dbReference type="ProteomicsDB" id="82758">
    <molecule id="Q9NV79-2"/>
</dbReference>
<dbReference type="ProteomicsDB" id="82759">
    <molecule id="Q9NV79-3"/>
</dbReference>
<dbReference type="Pumba" id="Q9NV79"/>
<dbReference type="Antibodypedia" id="30018">
    <property type="antibodies" value="81 antibodies from 16 providers"/>
</dbReference>
<dbReference type="DNASU" id="55251"/>
<dbReference type="Ensembl" id="ENST00000308824.11">
    <molecule id="Q9NV79-1"/>
    <property type="protein sequence ID" value="ENSP00000307854.6"/>
    <property type="gene ID" value="ENSG00000203880.13"/>
</dbReference>
<dbReference type="Ensembl" id="ENST00000369758.8">
    <molecule id="Q9NV79-2"/>
    <property type="protein sequence ID" value="ENSP00000358773.3"/>
    <property type="gene ID" value="ENSG00000203880.13"/>
</dbReference>
<dbReference type="Ensembl" id="ENST00000615818.3">
    <molecule id="Q9NV79-1"/>
    <property type="protein sequence ID" value="ENSP00000482166.1"/>
    <property type="gene ID" value="ENSG00000280663.4"/>
</dbReference>
<dbReference type="Ensembl" id="ENST00000627415.2">
    <molecule id="Q9NV79-1"/>
    <property type="protein sequence ID" value="ENSP00000486510.1"/>
    <property type="gene ID" value="ENSG00000280663.4"/>
</dbReference>
<dbReference type="Ensembl" id="ENST00000631244.2">
    <molecule id="Q9NV79-2"/>
    <property type="protein sequence ID" value="ENSP00000486003.1"/>
    <property type="gene ID" value="ENSG00000280663.4"/>
</dbReference>
<dbReference type="GeneID" id="55251"/>
<dbReference type="KEGG" id="hsa:55251"/>
<dbReference type="MANE-Select" id="ENST00000308824.11">
    <property type="protein sequence ID" value="ENSP00000307854.6"/>
    <property type="RefSeq nucleotide sequence ID" value="NM_018257.3"/>
    <property type="RefSeq protein sequence ID" value="NP_060727.2"/>
</dbReference>
<dbReference type="UCSC" id="uc002yil.5">
    <molecule id="Q9NV79-1"/>
    <property type="organism name" value="human"/>
</dbReference>
<dbReference type="AGR" id="HGNC:15882"/>
<dbReference type="CTD" id="55251"/>
<dbReference type="DisGeNET" id="55251"/>
<dbReference type="GeneCards" id="PCMTD2"/>
<dbReference type="HGNC" id="HGNC:15882">
    <property type="gene designation" value="PCMTD2"/>
</dbReference>
<dbReference type="HPA" id="ENSG00000203880">
    <property type="expression patterns" value="Tissue enhanced (retina)"/>
</dbReference>
<dbReference type="MIM" id="620077">
    <property type="type" value="gene"/>
</dbReference>
<dbReference type="neXtProt" id="NX_Q9NV79"/>
<dbReference type="OpenTargets" id="ENSG00000203880"/>
<dbReference type="PharmGKB" id="PA25750"/>
<dbReference type="VEuPathDB" id="HostDB:ENSG00000203880"/>
<dbReference type="eggNOG" id="KOG1661">
    <property type="taxonomic scope" value="Eukaryota"/>
</dbReference>
<dbReference type="GeneTree" id="ENSGT00950000183032"/>
<dbReference type="HOGENOM" id="CLU_029295_0_0_1"/>
<dbReference type="InParanoid" id="Q9NV79"/>
<dbReference type="OrthoDB" id="10257972at2759"/>
<dbReference type="PAN-GO" id="Q9NV79">
    <property type="GO annotations" value="2 GO annotations based on evolutionary models"/>
</dbReference>
<dbReference type="PhylomeDB" id="Q9NV79"/>
<dbReference type="TreeFam" id="TF329329"/>
<dbReference type="PathwayCommons" id="Q9NV79"/>
<dbReference type="SignaLink" id="Q9NV79"/>
<dbReference type="BioGRID-ORCS" id="55251">
    <property type="hits" value="30 hits in 1153 CRISPR screens"/>
</dbReference>
<dbReference type="ChiTaRS" id="PCMTD2">
    <property type="organism name" value="human"/>
</dbReference>
<dbReference type="GenomeRNAi" id="55251"/>
<dbReference type="Pharos" id="Q9NV79">
    <property type="development level" value="Tdark"/>
</dbReference>
<dbReference type="PRO" id="PR:Q9NV79"/>
<dbReference type="Proteomes" id="UP000005640">
    <property type="component" value="Chromosome 20"/>
</dbReference>
<dbReference type="RNAct" id="Q9NV79">
    <property type="molecule type" value="protein"/>
</dbReference>
<dbReference type="Bgee" id="ENSG00000203880">
    <property type="expression patterns" value="Expressed in pigmented layer of retina and 204 other cell types or tissues"/>
</dbReference>
<dbReference type="ExpressionAtlas" id="Q9NV79">
    <property type="expression patterns" value="baseline and differential"/>
</dbReference>
<dbReference type="GO" id="GO:0005737">
    <property type="term" value="C:cytoplasm"/>
    <property type="evidence" value="ECO:0000318"/>
    <property type="project" value="GO_Central"/>
</dbReference>
<dbReference type="GO" id="GO:0004719">
    <property type="term" value="F:protein-L-isoaspartate (D-aspartate) O-methyltransferase activity"/>
    <property type="evidence" value="ECO:0000318"/>
    <property type="project" value="GO_Central"/>
</dbReference>
<dbReference type="GO" id="GO:0036211">
    <property type="term" value="P:protein modification process"/>
    <property type="evidence" value="ECO:0007669"/>
    <property type="project" value="InterPro"/>
</dbReference>
<dbReference type="CDD" id="cd02440">
    <property type="entry name" value="AdoMet_MTases"/>
    <property type="match status" value="1"/>
</dbReference>
<dbReference type="FunFam" id="3.40.50.150:FF:000015">
    <property type="entry name" value="Protein-L-isoaspartate (D-aspartate) O-methyltransferase domain-containing 1"/>
    <property type="match status" value="1"/>
</dbReference>
<dbReference type="Gene3D" id="3.40.50.150">
    <property type="entry name" value="Vaccinia Virus protein VP39"/>
    <property type="match status" value="1"/>
</dbReference>
<dbReference type="InterPro" id="IPR000682">
    <property type="entry name" value="PCMT"/>
</dbReference>
<dbReference type="InterPro" id="IPR029063">
    <property type="entry name" value="SAM-dependent_MTases_sf"/>
</dbReference>
<dbReference type="PANTHER" id="PTHR11579">
    <property type="entry name" value="PROTEIN-L-ISOASPARTATE O-METHYLTRANSFERASE"/>
    <property type="match status" value="1"/>
</dbReference>
<dbReference type="PANTHER" id="PTHR11579:SF2">
    <property type="entry name" value="PROTEIN-L-ISOASPARTATE O-METHYLTRANSFERASE DOMAIN-CONTAINING PROTEIN 2"/>
    <property type="match status" value="1"/>
</dbReference>
<dbReference type="Pfam" id="PF01135">
    <property type="entry name" value="PCMT"/>
    <property type="match status" value="1"/>
</dbReference>
<dbReference type="SUPFAM" id="SSF53335">
    <property type="entry name" value="S-adenosyl-L-methionine-dependent methyltransferases"/>
    <property type="match status" value="1"/>
</dbReference>
<sequence>MGGAVSAGEDNDELIDNLKEAQYIRTELVEQAFRAIDRADYYLEEFKENAYKDLAWKHGNIHLSAPCIYSEVMEALDLQPGLSFLNLGSGTGYLSSMVGLILGPFGVNHGVELHSDVIEYAKQKLDFFIRTSDSFDKFDFCEPSFVTGNCLEISPDCSQYDRVYCGAGVQKEHEEYMKNLLKVGGILVMPLEEKLTKITRTGPSAWETKKILAVSFAPLIQPCHSESGKSRLVQLPPVAVRSLQDLARIAIRGTIKKIIHQETVSKNGNGLKNTPRFKRRRVRRRRMETIVFLDKEVFASRISNPSDDNSCEDLEEERREEEEKTPPETKPDPPVNFLRQKVLSLPLPDPLKYYLLYYREK</sequence>
<accession>Q9NV79</accession>
<accession>E1P5H3</accession>
<accession>Q8IW60</accession>
<accession>Q9H4K2</accession>
<feature type="initiator methionine" description="Removed" evidence="4">
    <location>
        <position position="1"/>
    </location>
</feature>
<feature type="chain" id="PRO_0000111927" description="Protein-L-isoaspartate O-methyltransferase domain-containing protein 2">
    <location>
        <begin position="2"/>
        <end position="361"/>
    </location>
</feature>
<feature type="region of interest" description="AdoMet binding motif" evidence="3">
    <location>
        <begin position="85"/>
        <end position="94"/>
    </location>
</feature>
<feature type="region of interest" description="AdoMet binding motif" evidence="3">
    <location>
        <begin position="160"/>
        <end position="164"/>
    </location>
</feature>
<feature type="region of interest" description="AdoMet binding motif" evidence="3">
    <location>
        <begin position="181"/>
        <end position="191"/>
    </location>
</feature>
<feature type="region of interest" description="BC-box" evidence="3">
    <location>
        <begin position="240"/>
        <end position="250"/>
    </location>
</feature>
<feature type="region of interest" description="Disordered" evidence="5">
    <location>
        <begin position="303"/>
        <end position="336"/>
    </location>
</feature>
<feature type="region of interest" description="CUL-box" evidence="3">
    <location>
        <begin position="345"/>
        <end position="348"/>
    </location>
</feature>
<feature type="compositionally biased region" description="Acidic residues" evidence="5">
    <location>
        <begin position="309"/>
        <end position="320"/>
    </location>
</feature>
<feature type="compositionally biased region" description="Basic and acidic residues" evidence="5">
    <location>
        <begin position="321"/>
        <end position="331"/>
    </location>
</feature>
<feature type="active site" evidence="2">
    <location>
        <position position="64"/>
    </location>
</feature>
<feature type="lipid moiety-binding region" description="N-myristoyl glycine" evidence="4">
    <location>
        <position position="2"/>
    </location>
</feature>
<feature type="splice variant" id="VSP_008546" description="In isoform 3." evidence="6">
    <location>
        <begin position="1"/>
        <end position="224"/>
    </location>
</feature>
<feature type="splice variant" id="VSP_008547" description="In isoform 2." evidence="7">
    <location>
        <begin position="195"/>
        <end position="221"/>
    </location>
</feature>
<feature type="splice variant" id="VSP_008548" description="In isoform 3." evidence="6">
    <original>SESGKSRLVQLP</original>
    <variation>MLRFCAGLSDFA</variation>
    <location>
        <begin position="225"/>
        <end position="236"/>
    </location>
</feature>
<feature type="sequence conflict" description="In Ref. 1; BAA91877." evidence="8" ref="1">
    <original>D</original>
    <variation>E</variation>
    <location>
        <position position="12"/>
    </location>
</feature>
<protein>
    <recommendedName>
        <fullName>Protein-L-isoaspartate O-methyltransferase domain-containing protein 2</fullName>
    </recommendedName>
</protein>
<name>PCMD2_HUMAN</name>
<reference key="1">
    <citation type="journal article" date="2004" name="Nat. Genet.">
        <title>Complete sequencing and characterization of 21,243 full-length human cDNAs.</title>
        <authorList>
            <person name="Ota T."/>
            <person name="Suzuki Y."/>
            <person name="Nishikawa T."/>
            <person name="Otsuki T."/>
            <person name="Sugiyama T."/>
            <person name="Irie R."/>
            <person name="Wakamatsu A."/>
            <person name="Hayashi K."/>
            <person name="Sato H."/>
            <person name="Nagai K."/>
            <person name="Kimura K."/>
            <person name="Makita H."/>
            <person name="Sekine M."/>
            <person name="Obayashi M."/>
            <person name="Nishi T."/>
            <person name="Shibahara T."/>
            <person name="Tanaka T."/>
            <person name="Ishii S."/>
            <person name="Yamamoto J."/>
            <person name="Saito K."/>
            <person name="Kawai Y."/>
            <person name="Isono Y."/>
            <person name="Nakamura Y."/>
            <person name="Nagahari K."/>
            <person name="Murakami K."/>
            <person name="Yasuda T."/>
            <person name="Iwayanagi T."/>
            <person name="Wagatsuma M."/>
            <person name="Shiratori A."/>
            <person name="Sudo H."/>
            <person name="Hosoiri T."/>
            <person name="Kaku Y."/>
            <person name="Kodaira H."/>
            <person name="Kondo H."/>
            <person name="Sugawara M."/>
            <person name="Takahashi M."/>
            <person name="Kanda K."/>
            <person name="Yokoi T."/>
            <person name="Furuya T."/>
            <person name="Kikkawa E."/>
            <person name="Omura Y."/>
            <person name="Abe K."/>
            <person name="Kamihara K."/>
            <person name="Katsuta N."/>
            <person name="Sato K."/>
            <person name="Tanikawa M."/>
            <person name="Yamazaki M."/>
            <person name="Ninomiya K."/>
            <person name="Ishibashi T."/>
            <person name="Yamashita H."/>
            <person name="Murakawa K."/>
            <person name="Fujimori K."/>
            <person name="Tanai H."/>
            <person name="Kimata M."/>
            <person name="Watanabe M."/>
            <person name="Hiraoka S."/>
            <person name="Chiba Y."/>
            <person name="Ishida S."/>
            <person name="Ono Y."/>
            <person name="Takiguchi S."/>
            <person name="Watanabe S."/>
            <person name="Yosida M."/>
            <person name="Hotuta T."/>
            <person name="Kusano J."/>
            <person name="Kanehori K."/>
            <person name="Takahashi-Fujii A."/>
            <person name="Hara H."/>
            <person name="Tanase T.-O."/>
            <person name="Nomura Y."/>
            <person name="Togiya S."/>
            <person name="Komai F."/>
            <person name="Hara R."/>
            <person name="Takeuchi K."/>
            <person name="Arita M."/>
            <person name="Imose N."/>
            <person name="Musashino K."/>
            <person name="Yuuki H."/>
            <person name="Oshima A."/>
            <person name="Sasaki N."/>
            <person name="Aotsuka S."/>
            <person name="Yoshikawa Y."/>
            <person name="Matsunawa H."/>
            <person name="Ichihara T."/>
            <person name="Shiohata N."/>
            <person name="Sano S."/>
            <person name="Moriya S."/>
            <person name="Momiyama H."/>
            <person name="Satoh N."/>
            <person name="Takami S."/>
            <person name="Terashima Y."/>
            <person name="Suzuki O."/>
            <person name="Nakagawa S."/>
            <person name="Senoh A."/>
            <person name="Mizoguchi H."/>
            <person name="Goto Y."/>
            <person name="Shimizu F."/>
            <person name="Wakebe H."/>
            <person name="Hishigaki H."/>
            <person name="Watanabe T."/>
            <person name="Sugiyama A."/>
            <person name="Takemoto M."/>
            <person name="Kawakami B."/>
            <person name="Yamazaki M."/>
            <person name="Watanabe K."/>
            <person name="Kumagai A."/>
            <person name="Itakura S."/>
            <person name="Fukuzumi Y."/>
            <person name="Fujimori Y."/>
            <person name="Komiyama M."/>
            <person name="Tashiro H."/>
            <person name="Tanigami A."/>
            <person name="Fujiwara T."/>
            <person name="Ono T."/>
            <person name="Yamada K."/>
            <person name="Fujii Y."/>
            <person name="Ozaki K."/>
            <person name="Hirao M."/>
            <person name="Ohmori Y."/>
            <person name="Kawabata A."/>
            <person name="Hikiji T."/>
            <person name="Kobatake N."/>
            <person name="Inagaki H."/>
            <person name="Ikema Y."/>
            <person name="Okamoto S."/>
            <person name="Okitani R."/>
            <person name="Kawakami T."/>
            <person name="Noguchi S."/>
            <person name="Itoh T."/>
            <person name="Shigeta K."/>
            <person name="Senba T."/>
            <person name="Matsumura K."/>
            <person name="Nakajima Y."/>
            <person name="Mizuno T."/>
            <person name="Morinaga M."/>
            <person name="Sasaki M."/>
            <person name="Togashi T."/>
            <person name="Oyama M."/>
            <person name="Hata H."/>
            <person name="Watanabe M."/>
            <person name="Komatsu T."/>
            <person name="Mizushima-Sugano J."/>
            <person name="Satoh T."/>
            <person name="Shirai Y."/>
            <person name="Takahashi Y."/>
            <person name="Nakagawa K."/>
            <person name="Okumura K."/>
            <person name="Nagase T."/>
            <person name="Nomura N."/>
            <person name="Kikuchi H."/>
            <person name="Masuho Y."/>
            <person name="Yamashita R."/>
            <person name="Nakai K."/>
            <person name="Yada T."/>
            <person name="Nakamura Y."/>
            <person name="Ohara O."/>
            <person name="Isogai T."/>
            <person name="Sugano S."/>
        </authorList>
    </citation>
    <scope>NUCLEOTIDE SEQUENCE [LARGE SCALE MRNA] (ISOFORMS 1 AND 3)</scope>
</reference>
<reference key="2">
    <citation type="journal article" date="2001" name="Nature">
        <title>The DNA sequence and comparative analysis of human chromosome 20.</title>
        <authorList>
            <person name="Deloukas P."/>
            <person name="Matthews L.H."/>
            <person name="Ashurst J.L."/>
            <person name="Burton J."/>
            <person name="Gilbert J.G.R."/>
            <person name="Jones M."/>
            <person name="Stavrides G."/>
            <person name="Almeida J.P."/>
            <person name="Babbage A.K."/>
            <person name="Bagguley C.L."/>
            <person name="Bailey J."/>
            <person name="Barlow K.F."/>
            <person name="Bates K.N."/>
            <person name="Beard L.M."/>
            <person name="Beare D.M."/>
            <person name="Beasley O.P."/>
            <person name="Bird C.P."/>
            <person name="Blakey S.E."/>
            <person name="Bridgeman A.M."/>
            <person name="Brown A.J."/>
            <person name="Buck D."/>
            <person name="Burrill W.D."/>
            <person name="Butler A.P."/>
            <person name="Carder C."/>
            <person name="Carter N.P."/>
            <person name="Chapman J.C."/>
            <person name="Clamp M."/>
            <person name="Clark G."/>
            <person name="Clark L.N."/>
            <person name="Clark S.Y."/>
            <person name="Clee C.M."/>
            <person name="Clegg S."/>
            <person name="Cobley V.E."/>
            <person name="Collier R.E."/>
            <person name="Connor R.E."/>
            <person name="Corby N.R."/>
            <person name="Coulson A."/>
            <person name="Coville G.J."/>
            <person name="Deadman R."/>
            <person name="Dhami P.D."/>
            <person name="Dunn M."/>
            <person name="Ellington A.G."/>
            <person name="Frankland J.A."/>
            <person name="Fraser A."/>
            <person name="French L."/>
            <person name="Garner P."/>
            <person name="Grafham D.V."/>
            <person name="Griffiths C."/>
            <person name="Griffiths M.N.D."/>
            <person name="Gwilliam R."/>
            <person name="Hall R.E."/>
            <person name="Hammond S."/>
            <person name="Harley J.L."/>
            <person name="Heath P.D."/>
            <person name="Ho S."/>
            <person name="Holden J.L."/>
            <person name="Howden P.J."/>
            <person name="Huckle E."/>
            <person name="Hunt A.R."/>
            <person name="Hunt S.E."/>
            <person name="Jekosch K."/>
            <person name="Johnson C.M."/>
            <person name="Johnson D."/>
            <person name="Kay M.P."/>
            <person name="Kimberley A.M."/>
            <person name="King A."/>
            <person name="Knights A."/>
            <person name="Laird G.K."/>
            <person name="Lawlor S."/>
            <person name="Lehvaeslaiho M.H."/>
            <person name="Leversha M.A."/>
            <person name="Lloyd C."/>
            <person name="Lloyd D.M."/>
            <person name="Lovell J.D."/>
            <person name="Marsh V.L."/>
            <person name="Martin S.L."/>
            <person name="McConnachie L.J."/>
            <person name="McLay K."/>
            <person name="McMurray A.A."/>
            <person name="Milne S.A."/>
            <person name="Mistry D."/>
            <person name="Moore M.J.F."/>
            <person name="Mullikin J.C."/>
            <person name="Nickerson T."/>
            <person name="Oliver K."/>
            <person name="Parker A."/>
            <person name="Patel R."/>
            <person name="Pearce T.A.V."/>
            <person name="Peck A.I."/>
            <person name="Phillimore B.J.C.T."/>
            <person name="Prathalingam S.R."/>
            <person name="Plumb R.W."/>
            <person name="Ramsay H."/>
            <person name="Rice C.M."/>
            <person name="Ross M.T."/>
            <person name="Scott C.E."/>
            <person name="Sehra H.K."/>
            <person name="Shownkeen R."/>
            <person name="Sims S."/>
            <person name="Skuce C.D."/>
            <person name="Smith M.L."/>
            <person name="Soderlund C."/>
            <person name="Steward C.A."/>
            <person name="Sulston J.E."/>
            <person name="Swann R.M."/>
            <person name="Sycamore N."/>
            <person name="Taylor R."/>
            <person name="Tee L."/>
            <person name="Thomas D.W."/>
            <person name="Thorpe A."/>
            <person name="Tracey A."/>
            <person name="Tromans A.C."/>
            <person name="Vaudin M."/>
            <person name="Wall M."/>
            <person name="Wallis J.M."/>
            <person name="Whitehead S.L."/>
            <person name="Whittaker P."/>
            <person name="Willey D.L."/>
            <person name="Williams L."/>
            <person name="Williams S.A."/>
            <person name="Wilming L."/>
            <person name="Wray P.W."/>
            <person name="Hubbard T."/>
            <person name="Durbin R.M."/>
            <person name="Bentley D.R."/>
            <person name="Beck S."/>
            <person name="Rogers J."/>
        </authorList>
    </citation>
    <scope>NUCLEOTIDE SEQUENCE [LARGE SCALE GENOMIC DNA]</scope>
</reference>
<reference key="3">
    <citation type="submission" date="2005-09" db="EMBL/GenBank/DDBJ databases">
        <authorList>
            <person name="Mural R.J."/>
            <person name="Istrail S."/>
            <person name="Sutton G.G."/>
            <person name="Florea L."/>
            <person name="Halpern A.L."/>
            <person name="Mobarry C.M."/>
            <person name="Lippert R."/>
            <person name="Walenz B."/>
            <person name="Shatkay H."/>
            <person name="Dew I."/>
            <person name="Miller J.R."/>
            <person name="Flanigan M.J."/>
            <person name="Edwards N.J."/>
            <person name="Bolanos R."/>
            <person name="Fasulo D."/>
            <person name="Halldorsson B.V."/>
            <person name="Hannenhalli S."/>
            <person name="Turner R."/>
            <person name="Yooseph S."/>
            <person name="Lu F."/>
            <person name="Nusskern D.R."/>
            <person name="Shue B.C."/>
            <person name="Zheng X.H."/>
            <person name="Zhong F."/>
            <person name="Delcher A.L."/>
            <person name="Huson D.H."/>
            <person name="Kravitz S.A."/>
            <person name="Mouchard L."/>
            <person name="Reinert K."/>
            <person name="Remington K.A."/>
            <person name="Clark A.G."/>
            <person name="Waterman M.S."/>
            <person name="Eichler E.E."/>
            <person name="Adams M.D."/>
            <person name="Hunkapiller M.W."/>
            <person name="Myers E.W."/>
            <person name="Venter J.C."/>
        </authorList>
    </citation>
    <scope>NUCLEOTIDE SEQUENCE [LARGE SCALE GENOMIC DNA]</scope>
</reference>
<reference key="4">
    <citation type="journal article" date="2004" name="Genome Res.">
        <title>The status, quality, and expansion of the NIH full-length cDNA project: the Mammalian Gene Collection (MGC).</title>
        <authorList>
            <consortium name="The MGC Project Team"/>
        </authorList>
    </citation>
    <scope>NUCLEOTIDE SEQUENCE [LARGE SCALE MRNA] (ISOFORMS 1 AND 2)</scope>
    <source>
        <tissue>Brain</tissue>
        <tissue>Placenta</tissue>
    </source>
</reference>
<comment type="function">
    <text evidence="3">May act as a substrate recognition component of an ECS (Elongin BC-CUL5-SOCS-box protein) E3 ubiquitin ligase complex which mediates the ubiquitination and subsequent proteasomal degradation of target proteins. May bind to the methyltransferase cofactor S-adenosylmethionine (AdoMet) via the N-terminal AdoMet binding motif, but probably does not display methyltransferase activity.</text>
</comment>
<comment type="interaction">
    <interactant intactId="EBI-6309018">
        <id>Q9NV79</id>
    </interactant>
    <interactant intactId="EBI-12883224">
        <id>Q9UKU0-7</id>
        <label>ACSL6</label>
    </interactant>
    <organismsDiffer>false</organismsDiffer>
    <experiments>3</experiments>
</comment>
<comment type="interaction">
    <interactant intactId="EBI-6309018">
        <id>Q9NV79</id>
    </interactant>
    <interactant intactId="EBI-930964">
        <id>P54253</id>
        <label>ATXN1</label>
    </interactant>
    <organismsDiffer>false</organismsDiffer>
    <experiments>6</experiments>
</comment>
<comment type="interaction">
    <interactant intactId="EBI-6309018">
        <id>Q9NV79</id>
    </interactant>
    <interactant intactId="EBI-25840379">
        <id>Q14203-5</id>
        <label>DCTN1</label>
    </interactant>
    <organismsDiffer>false</organismsDiffer>
    <experiments>3</experiments>
</comment>
<comment type="interaction">
    <interactant intactId="EBI-6309018">
        <id>Q9NV79</id>
    </interactant>
    <interactant intactId="EBI-10976677">
        <id>G5E9A7</id>
        <label>DMWD</label>
    </interactant>
    <organismsDiffer>false</organismsDiffer>
    <experiments>3</experiments>
</comment>
<comment type="interaction">
    <interactant intactId="EBI-6309018">
        <id>Q9NV79</id>
    </interactant>
    <interactant intactId="EBI-517086">
        <id>O43464</id>
        <label>HTRA2</label>
    </interactant>
    <organismsDiffer>false</organismsDiffer>
    <experiments>3</experiments>
</comment>
<comment type="interaction">
    <interactant intactId="EBI-6309018">
        <id>Q9NV79</id>
    </interactant>
    <interactant intactId="EBI-1055254">
        <id>Q8WXH2</id>
        <label>JPH3</label>
    </interactant>
    <organismsDiffer>false</organismsDiffer>
    <experiments>3</experiments>
</comment>
<comment type="interaction">
    <interactant intactId="EBI-6309018">
        <id>Q9NV79</id>
    </interactant>
    <interactant intactId="EBI-10975473">
        <id>O60333-2</id>
        <label>KIF1B</label>
    </interactant>
    <organismsDiffer>false</organismsDiffer>
    <experiments>3</experiments>
</comment>
<comment type="interaction">
    <interactant intactId="EBI-6309018">
        <id>Q9NV79</id>
    </interactant>
    <interactant intactId="EBI-1391623">
        <id>P29474</id>
        <label>NOS3</label>
    </interactant>
    <organismsDiffer>false</organismsDiffer>
    <experiments>3</experiments>
</comment>
<comment type="interaction">
    <interactant intactId="EBI-6309018">
        <id>Q9NV79</id>
    </interactant>
    <interactant intactId="EBI-50433196">
        <id>A0A6Q8PF08</id>
        <label>PMP22</label>
    </interactant>
    <organismsDiffer>false</organismsDiffer>
    <experiments>3</experiments>
</comment>
<comment type="interaction">
    <interactant intactId="EBI-6309018">
        <id>Q9NV79</id>
    </interactant>
    <interactant intactId="EBI-21251460">
        <id>O60260-5</id>
        <label>PRKN</label>
    </interactant>
    <organismsDiffer>false</organismsDiffer>
    <experiments>3</experiments>
</comment>
<comment type="interaction">
    <interactant intactId="EBI-6309018">
        <id>Q9NV79</id>
    </interactant>
    <interactant intactId="EBI-396669">
        <id>Q9Y3C5</id>
        <label>RNF11</label>
    </interactant>
    <organismsDiffer>false</organismsDiffer>
    <experiments>3</experiments>
</comment>
<comment type="interaction">
    <interactant intactId="EBI-6309018">
        <id>Q9NV79</id>
    </interactant>
    <interactant intactId="EBI-985879">
        <id>P37840</id>
        <label>SNCA</label>
    </interactant>
    <organismsDiffer>false</organismsDiffer>
    <experiments>3</experiments>
</comment>
<comment type="interaction">
    <interactant intactId="EBI-6309018">
        <id>Q9NV79</id>
    </interactant>
    <interactant intactId="EBI-5235340">
        <id>Q7Z699</id>
        <label>SPRED1</label>
    </interactant>
    <organismsDiffer>false</organismsDiffer>
    <experiments>3</experiments>
</comment>
<comment type="interaction">
    <interactant intactId="EBI-6309018">
        <id>Q9NV79</id>
    </interactant>
    <interactant intactId="EBI-372899">
        <id>Q13148</id>
        <label>TARDBP</label>
    </interactant>
    <organismsDiffer>false</organismsDiffer>
    <experiments>3</experiments>
</comment>
<comment type="interaction">
    <interactant intactId="EBI-6309018">
        <id>Q9NV79</id>
    </interactant>
    <interactant intactId="EBI-12157263">
        <id>P40337-2</id>
        <label>VHL</label>
    </interactant>
    <organismsDiffer>false</organismsDiffer>
    <experiments>3</experiments>
</comment>
<comment type="subcellular location">
    <subcellularLocation>
        <location evidence="1">Cytoplasm</location>
    </subcellularLocation>
</comment>
<comment type="alternative products">
    <event type="alternative splicing"/>
    <isoform>
        <id>Q9NV79-1</id>
        <name>1</name>
        <sequence type="displayed"/>
    </isoform>
    <isoform>
        <id>Q9NV79-2</id>
        <name>2</name>
        <sequence type="described" ref="VSP_008547"/>
    </isoform>
    <isoform>
        <id>Q9NV79-3</id>
        <name>3</name>
        <sequence type="described" ref="VSP_008546 VSP_008548"/>
    </isoform>
</comment>
<comment type="domain">
    <text evidence="3">At its N-terminus, contains L-isoaspartate and S-adenosylmethionine (AdoMet) binding motifs. Also contains an extended SOCS box motif, where the Cul-box is separated from the BC-box by ~90 residues, within its C-terminus.</text>
</comment>
<comment type="similarity">
    <text evidence="8">Belongs to the methyltransferase superfamily. L-isoaspartyl/D-aspartyl protein methyltransferase family.</text>
</comment>
<comment type="caution">
    <text evidence="3">Although the active site residue Ser is conserved, appears to lack catalytic activity in vitro.</text>
</comment>